<dbReference type="EMBL" id="AF245001">
    <property type="protein sequence ID" value="AAQ14243.1"/>
    <property type="molecule type" value="mRNA"/>
</dbReference>
<dbReference type="EMBL" id="AF245002">
    <property type="protein sequence ID" value="AAQ14244.1"/>
    <property type="molecule type" value="mRNA"/>
</dbReference>
<dbReference type="EMBL" id="CH473995">
    <property type="protein sequence ID" value="EDL78824.1"/>
    <property type="molecule type" value="Genomic_DNA"/>
</dbReference>
<dbReference type="EMBL" id="CH473995">
    <property type="protein sequence ID" value="EDL78825.1"/>
    <property type="molecule type" value="Genomic_DNA"/>
</dbReference>
<dbReference type="RefSeq" id="NP_001128158.1">
    <molecule id="B5D5N9-2"/>
    <property type="nucleotide sequence ID" value="NM_001134686.2"/>
</dbReference>
<dbReference type="RefSeq" id="NP_072141.2">
    <molecule id="B5D5N9-1"/>
    <property type="nucleotide sequence ID" value="NM_022619.3"/>
</dbReference>
<dbReference type="RefSeq" id="XP_038950738.1">
    <molecule id="B5D5N9-2"/>
    <property type="nucleotide sequence ID" value="XM_039094810.2"/>
</dbReference>
<dbReference type="SMR" id="B5D5N9"/>
<dbReference type="BioGRID" id="249135">
    <property type="interactions" value="1"/>
</dbReference>
<dbReference type="FunCoup" id="B5D5N9">
    <property type="interactions" value="441"/>
</dbReference>
<dbReference type="IntAct" id="B5D5N9">
    <property type="interactions" value="1"/>
</dbReference>
<dbReference type="MINT" id="B5D5N9"/>
<dbReference type="STRING" id="10116.ENSRNOP00000014809"/>
<dbReference type="GlyCosmos" id="B5D5N9">
    <property type="glycosylation" value="3 sites, No reported glycans"/>
</dbReference>
<dbReference type="GlyGen" id="B5D5N9">
    <property type="glycosylation" value="4 sites"/>
</dbReference>
<dbReference type="iPTMnet" id="B5D5N9"/>
<dbReference type="PhosphoSitePlus" id="B5D5N9"/>
<dbReference type="jPOST" id="B5D5N9"/>
<dbReference type="PaxDb" id="10116-ENSRNOP00000055811"/>
<dbReference type="PeptideAtlas" id="B5D5N9"/>
<dbReference type="Ensembl" id="ENSRNOT00000014809.6">
    <molecule id="B5D5N9-2"/>
    <property type="protein sequence ID" value="ENSRNOP00000014809.3"/>
    <property type="gene ID" value="ENSRNOG00000011016.8"/>
</dbReference>
<dbReference type="Ensembl" id="ENSRNOT00000015127.6">
    <molecule id="B5D5N9-1"/>
    <property type="protein sequence ID" value="ENSRNOP00000015127.4"/>
    <property type="gene ID" value="ENSRNOG00000011016.8"/>
</dbReference>
<dbReference type="GeneID" id="64554"/>
<dbReference type="KEGG" id="rno:64554"/>
<dbReference type="AGR" id="RGD:68387"/>
<dbReference type="CTD" id="6542"/>
<dbReference type="RGD" id="68387">
    <property type="gene designation" value="Slc7a2"/>
</dbReference>
<dbReference type="eggNOG" id="KOG1286">
    <property type="taxonomic scope" value="Eukaryota"/>
</dbReference>
<dbReference type="GeneTree" id="ENSGT00940000160440"/>
<dbReference type="HOGENOM" id="CLU_007946_15_7_1"/>
<dbReference type="InParanoid" id="B5D5N9"/>
<dbReference type="OMA" id="TRVWFSM"/>
<dbReference type="PhylomeDB" id="B5D5N9"/>
<dbReference type="PRO" id="PR:B5D5N9"/>
<dbReference type="Proteomes" id="UP000002494">
    <property type="component" value="Chromosome 16"/>
</dbReference>
<dbReference type="Proteomes" id="UP000234681">
    <property type="component" value="Chromosome 16"/>
</dbReference>
<dbReference type="Bgee" id="ENSRNOG00000011016">
    <property type="expression patterns" value="Expressed in liver and 17 other cell types or tissues"/>
</dbReference>
<dbReference type="GO" id="GO:0030054">
    <property type="term" value="C:cell junction"/>
    <property type="evidence" value="ECO:0007669"/>
    <property type="project" value="Ensembl"/>
</dbReference>
<dbReference type="GO" id="GO:0016020">
    <property type="term" value="C:membrane"/>
    <property type="evidence" value="ECO:0000266"/>
    <property type="project" value="RGD"/>
</dbReference>
<dbReference type="GO" id="GO:0005886">
    <property type="term" value="C:plasma membrane"/>
    <property type="evidence" value="ECO:0000318"/>
    <property type="project" value="GO_Central"/>
</dbReference>
<dbReference type="GO" id="GO:0015171">
    <property type="term" value="F:amino acid transmembrane transporter activity"/>
    <property type="evidence" value="ECO:0000266"/>
    <property type="project" value="RGD"/>
</dbReference>
<dbReference type="GO" id="GO:0015179">
    <property type="term" value="F:L-amino acid transmembrane transporter activity"/>
    <property type="evidence" value="ECO:0000266"/>
    <property type="project" value="RGD"/>
</dbReference>
<dbReference type="GO" id="GO:0061459">
    <property type="term" value="F:L-arginine transmembrane transporter activity"/>
    <property type="evidence" value="ECO:0000314"/>
    <property type="project" value="RGD"/>
</dbReference>
<dbReference type="GO" id="GO:0015189">
    <property type="term" value="F:L-lysine transmembrane transporter activity"/>
    <property type="evidence" value="ECO:0000318"/>
    <property type="project" value="GO_Central"/>
</dbReference>
<dbReference type="GO" id="GO:0000064">
    <property type="term" value="F:L-ornithine transmembrane transporter activity"/>
    <property type="evidence" value="ECO:0000318"/>
    <property type="project" value="GO_Central"/>
</dbReference>
<dbReference type="GO" id="GO:0089718">
    <property type="term" value="P:amino acid import across plasma membrane"/>
    <property type="evidence" value="ECO:0000266"/>
    <property type="project" value="RGD"/>
</dbReference>
<dbReference type="GO" id="GO:0051649">
    <property type="term" value="P:establishment of localization in cell"/>
    <property type="evidence" value="ECO:0000266"/>
    <property type="project" value="RGD"/>
</dbReference>
<dbReference type="GO" id="GO:1902475">
    <property type="term" value="P:L-alpha-amino acid transmembrane transport"/>
    <property type="evidence" value="ECO:0000266"/>
    <property type="project" value="RGD"/>
</dbReference>
<dbReference type="GO" id="GO:0015807">
    <property type="term" value="P:L-amino acid transport"/>
    <property type="evidence" value="ECO:0000266"/>
    <property type="project" value="RGD"/>
</dbReference>
<dbReference type="GO" id="GO:0097638">
    <property type="term" value="P:L-arginine import across plasma membrane"/>
    <property type="evidence" value="ECO:0000266"/>
    <property type="project" value="RGD"/>
</dbReference>
<dbReference type="GO" id="GO:1903826">
    <property type="term" value="P:L-arginine transmembrane transport"/>
    <property type="evidence" value="ECO:0000314"/>
    <property type="project" value="RGD"/>
</dbReference>
<dbReference type="GO" id="GO:1903352">
    <property type="term" value="P:L-ornithine transmembrane transport"/>
    <property type="evidence" value="ECO:0000318"/>
    <property type="project" value="GO_Central"/>
</dbReference>
<dbReference type="GO" id="GO:0042116">
    <property type="term" value="P:macrophage activation"/>
    <property type="evidence" value="ECO:0000266"/>
    <property type="project" value="RGD"/>
</dbReference>
<dbReference type="GO" id="GO:0006809">
    <property type="term" value="P:nitric oxide biosynthetic process"/>
    <property type="evidence" value="ECO:0000266"/>
    <property type="project" value="RGD"/>
</dbReference>
<dbReference type="GO" id="GO:0002537">
    <property type="term" value="P:nitric oxide production involved in inflammatory response"/>
    <property type="evidence" value="ECO:0000266"/>
    <property type="project" value="RGD"/>
</dbReference>
<dbReference type="GO" id="GO:0050727">
    <property type="term" value="P:regulation of inflammatory response"/>
    <property type="evidence" value="ECO:0000266"/>
    <property type="project" value="RGD"/>
</dbReference>
<dbReference type="GO" id="GO:0043030">
    <property type="term" value="P:regulation of macrophage activation"/>
    <property type="evidence" value="ECO:0000266"/>
    <property type="project" value="RGD"/>
</dbReference>
<dbReference type="FunFam" id="1.20.1740.10:FF:000034">
    <property type="entry name" value="cationic amino acid transporter 2 isoform X2"/>
    <property type="match status" value="1"/>
</dbReference>
<dbReference type="FunFam" id="1.20.1740.10:FF:000009">
    <property type="entry name" value="Low affinity cationic amino acid transporter 2"/>
    <property type="match status" value="1"/>
</dbReference>
<dbReference type="Gene3D" id="1.20.1740.10">
    <property type="entry name" value="Amino acid/polyamine transporter I"/>
    <property type="match status" value="2"/>
</dbReference>
<dbReference type="InterPro" id="IPR002293">
    <property type="entry name" value="AA/rel_permease1"/>
</dbReference>
<dbReference type="InterPro" id="IPR004755">
    <property type="entry name" value="Cat_AA_permease"/>
</dbReference>
<dbReference type="InterPro" id="IPR029485">
    <property type="entry name" value="CAT_C"/>
</dbReference>
<dbReference type="NCBIfam" id="TIGR00906">
    <property type="entry name" value="2A0303"/>
    <property type="match status" value="1"/>
</dbReference>
<dbReference type="PANTHER" id="PTHR43243:SF94">
    <property type="entry name" value="CATIONIC AMINO ACID TRANSPORTER 2"/>
    <property type="match status" value="1"/>
</dbReference>
<dbReference type="PANTHER" id="PTHR43243">
    <property type="entry name" value="INNER MEMBRANE TRANSPORTER YGJI-RELATED"/>
    <property type="match status" value="1"/>
</dbReference>
<dbReference type="Pfam" id="PF13520">
    <property type="entry name" value="AA_permease_2"/>
    <property type="match status" value="1"/>
</dbReference>
<dbReference type="Pfam" id="PF13906">
    <property type="entry name" value="AA_permease_C"/>
    <property type="match status" value="1"/>
</dbReference>
<evidence type="ECO:0000250" key="1">
    <source>
        <dbReference type="UniProtKB" id="P18581"/>
    </source>
</evidence>
<evidence type="ECO:0000250" key="2">
    <source>
        <dbReference type="UniProtKB" id="P52569"/>
    </source>
</evidence>
<evidence type="ECO:0000255" key="3"/>
<evidence type="ECO:0000303" key="4">
    <source ref="1"/>
</evidence>
<evidence type="ECO:0000305" key="5"/>
<evidence type="ECO:0007744" key="6">
    <source>
    </source>
</evidence>
<feature type="chain" id="PRO_0000375227" description="Cationic amino acid transporter 2">
    <location>
        <begin position="1"/>
        <end position="657"/>
    </location>
</feature>
<feature type="topological domain" description="Cytoplasmic" evidence="3">
    <location>
        <begin position="1"/>
        <end position="38"/>
    </location>
</feature>
<feature type="transmembrane region" description="Helical" evidence="3">
    <location>
        <begin position="39"/>
        <end position="59"/>
    </location>
</feature>
<feature type="topological domain" description="Extracellular" evidence="3">
    <location>
        <begin position="60"/>
        <end position="66"/>
    </location>
</feature>
<feature type="transmembrane region" description="Helical" evidence="3">
    <location>
        <begin position="67"/>
        <end position="87"/>
    </location>
</feature>
<feature type="topological domain" description="Cytoplasmic" evidence="3">
    <location>
        <begin position="88"/>
        <end position="104"/>
    </location>
</feature>
<feature type="transmembrane region" description="Helical" evidence="3">
    <location>
        <begin position="105"/>
        <end position="125"/>
    </location>
</feature>
<feature type="topological domain" description="Extracellular" evidence="3">
    <location>
        <begin position="126"/>
        <end position="163"/>
    </location>
</feature>
<feature type="transmembrane region" description="Helical" evidence="3">
    <location>
        <begin position="164"/>
        <end position="184"/>
    </location>
</feature>
<feature type="topological domain" description="Cytoplasmic" evidence="3">
    <location>
        <begin position="185"/>
        <end position="192"/>
    </location>
</feature>
<feature type="transmembrane region" description="Helical" evidence="3">
    <location>
        <begin position="193"/>
        <end position="213"/>
    </location>
</feature>
<feature type="topological domain" description="Extracellular" evidence="3">
    <location>
        <begin position="214"/>
        <end position="248"/>
    </location>
</feature>
<feature type="transmembrane region" description="Helical" evidence="3">
    <location>
        <begin position="249"/>
        <end position="269"/>
    </location>
</feature>
<feature type="topological domain" description="Cytoplasmic" evidence="3">
    <location>
        <begin position="270"/>
        <end position="289"/>
    </location>
</feature>
<feature type="transmembrane region" description="Helical" evidence="3">
    <location>
        <begin position="290"/>
        <end position="310"/>
    </location>
</feature>
<feature type="topological domain" description="Extracellular" evidence="3">
    <location>
        <begin position="311"/>
        <end position="339"/>
    </location>
</feature>
<feature type="transmembrane region" description="Helical" evidence="3">
    <location>
        <begin position="340"/>
        <end position="360"/>
    </location>
</feature>
<feature type="topological domain" description="Cytoplasmic" evidence="3">
    <location>
        <begin position="361"/>
        <end position="385"/>
    </location>
</feature>
<feature type="transmembrane region" description="Helical" evidence="3">
    <location>
        <begin position="386"/>
        <end position="406"/>
    </location>
</feature>
<feature type="topological domain" description="Extracellular" evidence="3">
    <location>
        <begin position="407"/>
        <end position="409"/>
    </location>
</feature>
<feature type="transmembrane region" description="Helical" evidence="3">
    <location>
        <begin position="410"/>
        <end position="430"/>
    </location>
</feature>
<feature type="topological domain" description="Cytoplasmic" evidence="3">
    <location>
        <begin position="431"/>
        <end position="489"/>
    </location>
</feature>
<feature type="transmembrane region" description="Helical" evidence="3">
    <location>
        <begin position="490"/>
        <end position="510"/>
    </location>
</feature>
<feature type="topological domain" description="Extracellular" evidence="3">
    <location>
        <begin position="511"/>
        <end position="523"/>
    </location>
</feature>
<feature type="transmembrane region" description="Helical" evidence="3">
    <location>
        <begin position="524"/>
        <end position="544"/>
    </location>
</feature>
<feature type="topological domain" description="Cytoplasmic" evidence="3">
    <location>
        <begin position="545"/>
        <end position="554"/>
    </location>
</feature>
<feature type="transmembrane region" description="Helical" evidence="3">
    <location>
        <begin position="555"/>
        <end position="575"/>
    </location>
</feature>
<feature type="topological domain" description="Extracellular" evidence="3">
    <location>
        <begin position="576"/>
        <end position="581"/>
    </location>
</feature>
<feature type="transmembrane region" description="Helical" evidence="3">
    <location>
        <begin position="582"/>
        <end position="602"/>
    </location>
</feature>
<feature type="topological domain" description="Cytoplasmic" evidence="3">
    <location>
        <begin position="603"/>
        <end position="657"/>
    </location>
</feature>
<feature type="modified residue" description="Phosphoserine" evidence="2">
    <location>
        <position position="24"/>
    </location>
</feature>
<feature type="modified residue" description="Phosphoserine" evidence="2">
    <location>
        <position position="463"/>
    </location>
</feature>
<feature type="modified residue" description="Phosphoserine" evidence="6">
    <location>
        <position position="645"/>
    </location>
</feature>
<feature type="glycosylation site" description="N-linked (GlcNAc...) asparagine" evidence="3">
    <location>
        <position position="157"/>
    </location>
</feature>
<feature type="glycosylation site" description="N-linked (GlcNAc...) asparagine" evidence="3">
    <location>
        <position position="227"/>
    </location>
</feature>
<feature type="glycosylation site" description="N-linked (GlcNAc...) asparagine" evidence="3">
    <location>
        <position position="239"/>
    </location>
</feature>
<feature type="splice variant" id="VSP_037355" description="In isoform 2." evidence="4">
    <original>MFPLPRILFAMARDGLLFRFLARVSKRQSPVAATMTAGVIS</original>
    <variation>IFPMPRVIYAMAEDGLLFKCLAQINSKTKTPIIATLSSGAVA</variation>
    <location>
        <begin position="357"/>
        <end position="397"/>
    </location>
</feature>
<comment type="function">
    <text evidence="1 2">Functions as a permease involved in the transport of the cationic amino acids (L-arginine, L-lysine, L-ornithine and L-homoarginine). The affinity for its substrates differs between isoforms created by alternative splicing (By similarity). May play a role in classical or alternative activation of macrophages via its role in arginine transport (By similarity).</text>
</comment>
<comment type="catalytic activity">
    <reaction evidence="1">
        <text>L-arginine(in) = L-arginine(out)</text>
        <dbReference type="Rhea" id="RHEA:32143"/>
        <dbReference type="ChEBI" id="CHEBI:32682"/>
    </reaction>
</comment>
<comment type="catalytic activity">
    <reaction evidence="1">
        <text>L-lysine(in) = L-lysine(out)</text>
        <dbReference type="Rhea" id="RHEA:70935"/>
        <dbReference type="ChEBI" id="CHEBI:32551"/>
    </reaction>
</comment>
<comment type="catalytic activity">
    <reaction evidence="1">
        <text>L-ornithine(in) = L-ornithine(out)</text>
        <dbReference type="Rhea" id="RHEA:71199"/>
        <dbReference type="ChEBI" id="CHEBI:46911"/>
    </reaction>
</comment>
<comment type="catalytic activity">
    <reaction evidence="2">
        <text>L-homoarginine(in) = L-homoarginine(out)</text>
        <dbReference type="Rhea" id="RHEA:71203"/>
        <dbReference type="ChEBI" id="CHEBI:143006"/>
    </reaction>
</comment>
<comment type="subcellular location">
    <subcellularLocation>
        <location evidence="1">Cell membrane</location>
        <topology evidence="1">Multi-pass membrane protein</topology>
    </subcellularLocation>
</comment>
<comment type="alternative products">
    <event type="alternative splicing"/>
    <isoform>
        <id>B5D5N9-1</id>
        <name>1</name>
        <name>CAT2A</name>
        <sequence type="displayed"/>
    </isoform>
    <isoform>
        <id>B5D5N9-2</id>
        <name>2</name>
        <name>CAT2B</name>
        <sequence type="described" ref="VSP_037355"/>
    </isoform>
</comment>
<comment type="similarity">
    <text evidence="5">Belongs to the amino acid-polyamine-organocation (APC) superfamily. Cationic amino acid transporter (CAT) (TC 2.A.3.3) family.</text>
</comment>
<accession>B5D5N9</accession>
<accession>B5D5P0</accession>
<reference key="1">
    <citation type="submission" date="2000-03" db="EMBL/GenBank/DDBJ databases">
        <title>Rattus cationic amino acid transporter-2 (rCAT-2) mRNA.</title>
        <authorList>
            <person name="Cui Z."/>
            <person name="Kelly J."/>
            <person name="Brzeski H."/>
            <person name="Marber M."/>
            <person name="Pearson J.D."/>
            <person name="Baydoun A.R."/>
        </authorList>
    </citation>
    <scope>NUCLEOTIDE SEQUENCE [MRNA] (ISOFORMS 1 AND 2)</scope>
    <source>
        <strain>Wistar</strain>
        <tissue>Aortic smooth muscle</tissue>
    </source>
</reference>
<reference key="2">
    <citation type="submission" date="2005-09" db="EMBL/GenBank/DDBJ databases">
        <authorList>
            <person name="Mural R.J."/>
            <person name="Adams M.D."/>
            <person name="Myers E.W."/>
            <person name="Smith H.O."/>
            <person name="Venter J.C."/>
        </authorList>
    </citation>
    <scope>NUCLEOTIDE SEQUENCE [LARGE SCALE GENOMIC DNA]</scope>
    <source>
        <strain>Brown Norway</strain>
    </source>
</reference>
<reference key="3">
    <citation type="journal article" date="2012" name="Nat. Commun.">
        <title>Quantitative maps of protein phosphorylation sites across 14 different rat organs and tissues.</title>
        <authorList>
            <person name="Lundby A."/>
            <person name="Secher A."/>
            <person name="Lage K."/>
            <person name="Nordsborg N.B."/>
            <person name="Dmytriyev A."/>
            <person name="Lundby C."/>
            <person name="Olsen J.V."/>
        </authorList>
    </citation>
    <scope>PHOSPHORYLATION [LARGE SCALE ANALYSIS] AT SER-645</scope>
    <scope>IDENTIFICATION BY MASS SPECTROMETRY [LARGE SCALE ANALYSIS]</scope>
</reference>
<name>CTR2_RAT</name>
<proteinExistence type="evidence at protein level"/>
<gene>
    <name type="primary">Slc7a2</name>
    <name type="synonym">Atrc2</name>
    <name type="synonym">Cat2</name>
</gene>
<keyword id="KW-0025">Alternative splicing</keyword>
<keyword id="KW-0029">Amino-acid transport</keyword>
<keyword id="KW-1003">Cell membrane</keyword>
<keyword id="KW-0325">Glycoprotein</keyword>
<keyword id="KW-0472">Membrane</keyword>
<keyword id="KW-0597">Phosphoprotein</keyword>
<keyword id="KW-1185">Reference proteome</keyword>
<keyword id="KW-0812">Transmembrane</keyword>
<keyword id="KW-1133">Transmembrane helix</keyword>
<keyword id="KW-0813">Transport</keyword>
<organism>
    <name type="scientific">Rattus norvegicus</name>
    <name type="common">Rat</name>
    <dbReference type="NCBI Taxonomy" id="10116"/>
    <lineage>
        <taxon>Eukaryota</taxon>
        <taxon>Metazoa</taxon>
        <taxon>Chordata</taxon>
        <taxon>Craniata</taxon>
        <taxon>Vertebrata</taxon>
        <taxon>Euteleostomi</taxon>
        <taxon>Mammalia</taxon>
        <taxon>Eutheria</taxon>
        <taxon>Euarchontoglires</taxon>
        <taxon>Glires</taxon>
        <taxon>Rodentia</taxon>
        <taxon>Myomorpha</taxon>
        <taxon>Muroidea</taxon>
        <taxon>Muridae</taxon>
        <taxon>Murinae</taxon>
        <taxon>Rattus</taxon>
    </lineage>
</organism>
<protein>
    <recommendedName>
        <fullName>Cationic amino acid transporter 2</fullName>
        <shortName>CAT-2</shortName>
        <shortName>CAT2</shortName>
    </recommendedName>
    <alternativeName>
        <fullName>Low affinity cationic amino acid transporter 2</fullName>
    </alternativeName>
    <alternativeName>
        <fullName>Solute carrier family 7 member 2</fullName>
    </alternativeName>
</protein>
<sequence length="657" mass="71694">MIPCRAVLTFTRCLIRRKIVTLDSLEDSKLCRCLTTMDLIALGVGSTLGAGVYVLAGEVAKADSGPSIVVSFLIAALASVMAGLCYAEFGARVPKTGSAYLYTYVTVGELWAFITGWNLILSYVIGTSSVARAWSGTFDELLNKQIGQFFKTYFKMNYTGLAEYPDFFAVCLVLLLAGLLSFGVKESAWVNKFFTAINILVLLFVMVAGFVKGNVANWKISEEFLKNISASAREPPSENGTSIYGAGGFMPYGFTGTLAGAATCFYAFVGFDCIATTGEEVRNPQKAIPIGIVTSLLVCFMAYFGVSAALTLMMPYYLLDEKSPLPVAFEYVGWGPAKYVVAAGSLCALSTSLLGSMFPLPRILFAMARDGLLFRFLARVSKRQSPVAATMTAGVISAVMAFLFDLKALVDMMSIGTLMAYSLVAACVLILRYQPGLCYEQPKYTPEKDILESCTNATSKSESQVTMLQGQGFSLRTLFNPSALPTRQSASLVSFLVGFLAFLIAGLSILTTYGVQAIARLEAWSLALLALFLVLCAAVILTIWRQPQNQQKVAFMVPFLPFLPAFSILVNIYLMVQLSADTWVRFSIWMVLGFLIYFAYGIRHSLEGNPRDEEEDEDVCPDNVNAAAEEKSAMQANDHHQRNLSLPFILHEKTSEC</sequence>